<protein>
    <recommendedName>
        <fullName evidence="1">Glutamyl-tRNA(Gln) amidotransferase subunit A</fullName>
        <shortName evidence="1">Glu-ADT subunit A</shortName>
        <ecNumber evidence="1">6.3.5.7</ecNumber>
    </recommendedName>
</protein>
<accession>Q82JL0</accession>
<name>GATA_STRAW</name>
<dbReference type="EC" id="6.3.5.7" evidence="1"/>
<dbReference type="EMBL" id="BA000030">
    <property type="protein sequence ID" value="BAC70456.1"/>
    <property type="molecule type" value="Genomic_DNA"/>
</dbReference>
<dbReference type="RefSeq" id="WP_010984177.1">
    <property type="nucleotide sequence ID" value="NZ_JZJK01000071.1"/>
</dbReference>
<dbReference type="SMR" id="Q82JL0"/>
<dbReference type="GeneID" id="41539833"/>
<dbReference type="KEGG" id="sma:SAVERM_2745"/>
<dbReference type="eggNOG" id="COG0154">
    <property type="taxonomic scope" value="Bacteria"/>
</dbReference>
<dbReference type="HOGENOM" id="CLU_009600_0_3_11"/>
<dbReference type="OrthoDB" id="9811471at2"/>
<dbReference type="Proteomes" id="UP000000428">
    <property type="component" value="Chromosome"/>
</dbReference>
<dbReference type="GO" id="GO:0030956">
    <property type="term" value="C:glutamyl-tRNA(Gln) amidotransferase complex"/>
    <property type="evidence" value="ECO:0007669"/>
    <property type="project" value="InterPro"/>
</dbReference>
<dbReference type="GO" id="GO:0005524">
    <property type="term" value="F:ATP binding"/>
    <property type="evidence" value="ECO:0007669"/>
    <property type="project" value="UniProtKB-KW"/>
</dbReference>
<dbReference type="GO" id="GO:0050567">
    <property type="term" value="F:glutaminyl-tRNA synthase (glutamine-hydrolyzing) activity"/>
    <property type="evidence" value="ECO:0007669"/>
    <property type="project" value="UniProtKB-UniRule"/>
</dbReference>
<dbReference type="GO" id="GO:0006412">
    <property type="term" value="P:translation"/>
    <property type="evidence" value="ECO:0007669"/>
    <property type="project" value="UniProtKB-UniRule"/>
</dbReference>
<dbReference type="Gene3D" id="3.90.1300.10">
    <property type="entry name" value="Amidase signature (AS) domain"/>
    <property type="match status" value="1"/>
</dbReference>
<dbReference type="HAMAP" id="MF_00120">
    <property type="entry name" value="GatA"/>
    <property type="match status" value="1"/>
</dbReference>
<dbReference type="InterPro" id="IPR000120">
    <property type="entry name" value="Amidase"/>
</dbReference>
<dbReference type="InterPro" id="IPR020556">
    <property type="entry name" value="Amidase_CS"/>
</dbReference>
<dbReference type="InterPro" id="IPR023631">
    <property type="entry name" value="Amidase_dom"/>
</dbReference>
<dbReference type="InterPro" id="IPR036928">
    <property type="entry name" value="AS_sf"/>
</dbReference>
<dbReference type="InterPro" id="IPR004412">
    <property type="entry name" value="GatA"/>
</dbReference>
<dbReference type="NCBIfam" id="TIGR00132">
    <property type="entry name" value="gatA"/>
    <property type="match status" value="1"/>
</dbReference>
<dbReference type="PANTHER" id="PTHR11895:SF151">
    <property type="entry name" value="GLUTAMYL-TRNA(GLN) AMIDOTRANSFERASE SUBUNIT A"/>
    <property type="match status" value="1"/>
</dbReference>
<dbReference type="PANTHER" id="PTHR11895">
    <property type="entry name" value="TRANSAMIDASE"/>
    <property type="match status" value="1"/>
</dbReference>
<dbReference type="Pfam" id="PF01425">
    <property type="entry name" value="Amidase"/>
    <property type="match status" value="1"/>
</dbReference>
<dbReference type="SUPFAM" id="SSF75304">
    <property type="entry name" value="Amidase signature (AS) enzymes"/>
    <property type="match status" value="1"/>
</dbReference>
<dbReference type="PROSITE" id="PS00571">
    <property type="entry name" value="AMIDASES"/>
    <property type="match status" value="1"/>
</dbReference>
<organism>
    <name type="scientific">Streptomyces avermitilis (strain ATCC 31267 / DSM 46492 / JCM 5070 / NBRC 14893 / NCIMB 12804 / NRRL 8165 / MA-4680)</name>
    <dbReference type="NCBI Taxonomy" id="227882"/>
    <lineage>
        <taxon>Bacteria</taxon>
        <taxon>Bacillati</taxon>
        <taxon>Actinomycetota</taxon>
        <taxon>Actinomycetes</taxon>
        <taxon>Kitasatosporales</taxon>
        <taxon>Streptomycetaceae</taxon>
        <taxon>Streptomyces</taxon>
    </lineage>
</organism>
<sequence length="501" mass="52780">MTDTNVNIIRLTAAEIAAKVASGELTAVQVTEAHLARIDAVDEKVHAFLHVDREGALAQARAVDEKRERGEKLGPLAGVPLALKDIFTTEGIPTTVGSKILEGWIPPYDATLTKKLKAADVVILGKTNMDEFAMGSSTENSAYGPTGNPWDLSRIPGGSGGGSSAALASFEAPLAIGTDTGGSIRQPAAVTGTVGVKPTYGAVSRYGMVAFSSSLDQGGPCARTVLDAALLHEVIAGHDPLDSTSIDAPVPPVVEAARNGSVEGMRVGVVKQFRGEGYQAGVLQRFDESVALLKELGAEIVELDCPSFDLALSAYYLIAPSECSSNLARFDGLRYGVRVGDDGTRSAEEVTALTREAGFGDEVKRRIMLGTYALSSGYYDAYYGSAQKVRTLITRDFEKSFEQVDVIVSPTTPTTAFPIGERADDPMAMYLADLCTIPTNLAGNAAMSLPCGLAPEDNLPVGLQIIAPALKDDRLYKVGAAVEAAFVEKWGHPLIEEAPSL</sequence>
<keyword id="KW-0067">ATP-binding</keyword>
<keyword id="KW-0436">Ligase</keyword>
<keyword id="KW-0547">Nucleotide-binding</keyword>
<keyword id="KW-0648">Protein biosynthesis</keyword>
<keyword id="KW-1185">Reference proteome</keyword>
<reference key="1">
    <citation type="journal article" date="2001" name="Proc. Natl. Acad. Sci. U.S.A.">
        <title>Genome sequence of an industrial microorganism Streptomyces avermitilis: deducing the ability of producing secondary metabolites.</title>
        <authorList>
            <person name="Omura S."/>
            <person name="Ikeda H."/>
            <person name="Ishikawa J."/>
            <person name="Hanamoto A."/>
            <person name="Takahashi C."/>
            <person name="Shinose M."/>
            <person name="Takahashi Y."/>
            <person name="Horikawa H."/>
            <person name="Nakazawa H."/>
            <person name="Osonoe T."/>
            <person name="Kikuchi H."/>
            <person name="Shiba T."/>
            <person name="Sakaki Y."/>
            <person name="Hattori M."/>
        </authorList>
    </citation>
    <scope>NUCLEOTIDE SEQUENCE [LARGE SCALE GENOMIC DNA]</scope>
    <source>
        <strain>ATCC 31267 / DSM 46492 / JCM 5070 / NBRC 14893 / NCIMB 12804 / NRRL 8165 / MA-4680</strain>
    </source>
</reference>
<reference key="2">
    <citation type="journal article" date="2003" name="Nat. Biotechnol.">
        <title>Complete genome sequence and comparative analysis of the industrial microorganism Streptomyces avermitilis.</title>
        <authorList>
            <person name="Ikeda H."/>
            <person name="Ishikawa J."/>
            <person name="Hanamoto A."/>
            <person name="Shinose M."/>
            <person name="Kikuchi H."/>
            <person name="Shiba T."/>
            <person name="Sakaki Y."/>
            <person name="Hattori M."/>
            <person name="Omura S."/>
        </authorList>
    </citation>
    <scope>NUCLEOTIDE SEQUENCE [LARGE SCALE GENOMIC DNA]</scope>
    <source>
        <strain>ATCC 31267 / DSM 46492 / JCM 5070 / NBRC 14893 / NCIMB 12804 / NRRL 8165 / MA-4680</strain>
    </source>
</reference>
<comment type="function">
    <text evidence="1">Allows the formation of correctly charged Gln-tRNA(Gln) through the transamidation of misacylated Glu-tRNA(Gln) in organisms which lack glutaminyl-tRNA synthetase. The reaction takes place in the presence of glutamine and ATP through an activated gamma-phospho-Glu-tRNA(Gln).</text>
</comment>
<comment type="catalytic activity">
    <reaction evidence="1">
        <text>L-glutamyl-tRNA(Gln) + L-glutamine + ATP + H2O = L-glutaminyl-tRNA(Gln) + L-glutamate + ADP + phosphate + H(+)</text>
        <dbReference type="Rhea" id="RHEA:17521"/>
        <dbReference type="Rhea" id="RHEA-COMP:9681"/>
        <dbReference type="Rhea" id="RHEA-COMP:9684"/>
        <dbReference type="ChEBI" id="CHEBI:15377"/>
        <dbReference type="ChEBI" id="CHEBI:15378"/>
        <dbReference type="ChEBI" id="CHEBI:29985"/>
        <dbReference type="ChEBI" id="CHEBI:30616"/>
        <dbReference type="ChEBI" id="CHEBI:43474"/>
        <dbReference type="ChEBI" id="CHEBI:58359"/>
        <dbReference type="ChEBI" id="CHEBI:78520"/>
        <dbReference type="ChEBI" id="CHEBI:78521"/>
        <dbReference type="ChEBI" id="CHEBI:456216"/>
        <dbReference type="EC" id="6.3.5.7"/>
    </reaction>
</comment>
<comment type="subunit">
    <text evidence="1">Heterotrimer of A, B and C subunits.</text>
</comment>
<comment type="similarity">
    <text evidence="1">Belongs to the amidase family. GatA subfamily.</text>
</comment>
<proteinExistence type="inferred from homology"/>
<evidence type="ECO:0000255" key="1">
    <source>
        <dbReference type="HAMAP-Rule" id="MF_00120"/>
    </source>
</evidence>
<gene>
    <name evidence="1" type="primary">gatA</name>
    <name type="ordered locus">SAV_2745</name>
</gene>
<feature type="chain" id="PRO_0000105209" description="Glutamyl-tRNA(Gln) amidotransferase subunit A">
    <location>
        <begin position="1"/>
        <end position="501"/>
    </location>
</feature>
<feature type="active site" description="Charge relay system" evidence="1">
    <location>
        <position position="84"/>
    </location>
</feature>
<feature type="active site" description="Charge relay system" evidence="1">
    <location>
        <position position="159"/>
    </location>
</feature>
<feature type="active site" description="Acyl-ester intermediate" evidence="1">
    <location>
        <position position="183"/>
    </location>
</feature>